<organism>
    <name type="scientific">Dichotomyctere fluviatilis</name>
    <name type="common">Green pufferfish</name>
    <name type="synonym">Tetraodon fluviatilis</name>
    <dbReference type="NCBI Taxonomy" id="2593188"/>
    <lineage>
        <taxon>Eukaryota</taxon>
        <taxon>Metazoa</taxon>
        <taxon>Chordata</taxon>
        <taxon>Craniata</taxon>
        <taxon>Vertebrata</taxon>
        <taxon>Euteleostomi</taxon>
        <taxon>Actinopterygii</taxon>
        <taxon>Neopterygii</taxon>
        <taxon>Teleostei</taxon>
        <taxon>Neoteleostei</taxon>
        <taxon>Acanthomorphata</taxon>
        <taxon>Eupercaria</taxon>
        <taxon>Tetraodontiformes</taxon>
        <taxon>Tetradontoidea</taxon>
        <taxon>Tetraodontidae</taxon>
        <taxon>Dichotomyctere</taxon>
    </lineage>
</organism>
<reference key="1">
    <citation type="submission" date="1996-04" db="EMBL/GenBank/DDBJ databases">
        <authorList>
            <person name="Chang M.S."/>
            <person name="Chang G.D."/>
            <person name="Huang F.L."/>
            <person name="Huang C.J."/>
            <person name="Lo T.B."/>
        </authorList>
    </citation>
    <scope>NUCLEOTIDE SEQUENCE [GENOMIC DNA]</scope>
</reference>
<sequence length="374" mass="40526">MMFTSFNAECDSSSRCSASPSDNVYYPSPAGSYSSMGSPQSQDLTDLTASSASFVPTVTAISTSPDLQWMVQPLVSSVAPSRRAHPYSPSPSYKRTVMRSGASKPHAKRGRVEQTTPEEEEKKRIRRERNKQAAAKCRNRRRELTDSLQAETDQLEAEKSSLQNDIANLLKEKERLEFILAAHQPICKIPSQMDSDFPVVSMSPVHAYLSTAASTQPQTSVPEATTVTSSHSTFTSTSNSIFGSNSDSLLSTATVSDSVVKMTDLESSVLEESLDLLAKTEVETVEVPDVNLSSSLYTAQDWEPLHATIGSSDFEPLCTPVVTCTPACTTITSSFVFTFPEAETFPTCCVAHRRGSNSNDQSSDSLSSPTLLAL</sequence>
<protein>
    <recommendedName>
        <fullName evidence="4">Protein c-Fos</fullName>
    </recommendedName>
    <alternativeName>
        <fullName>Cellular oncogene fos</fullName>
    </alternativeName>
    <alternativeName>
        <fullName evidence="4">Transcription factor AP-1 subunit c-Fos</fullName>
    </alternativeName>
</protein>
<evidence type="ECO:0000250" key="1"/>
<evidence type="ECO:0000255" key="2">
    <source>
        <dbReference type="PROSITE-ProRule" id="PRU00978"/>
    </source>
</evidence>
<evidence type="ECO:0000256" key="3">
    <source>
        <dbReference type="SAM" id="MobiDB-lite"/>
    </source>
</evidence>
<evidence type="ECO:0000305" key="4"/>
<comment type="function">
    <text evidence="1">Nuclear phosphoprotein which forms a tight but non-covalently linked complex with the JUN/AP-1 transcription factor. FOS has a critical function in regulating the development of cells destined to form and maintain the skeleton. It is thought to have an important role in signal transduction, cell proliferation and differentiation (By similarity).</text>
</comment>
<comment type="subunit">
    <text evidence="1">Heterodimer.</text>
</comment>
<comment type="subcellular location">
    <subcellularLocation>
        <location>Nucleus</location>
    </subcellularLocation>
</comment>
<comment type="similarity">
    <text evidence="4">Belongs to the bZIP family. Fos subfamily.</text>
</comment>
<dbReference type="EMBL" id="U53520">
    <property type="protein sequence ID" value="AAB07359.1"/>
    <property type="molecule type" value="Genomic_DNA"/>
</dbReference>
<dbReference type="SMR" id="Q91496"/>
<dbReference type="GO" id="GO:0005634">
    <property type="term" value="C:nucleus"/>
    <property type="evidence" value="ECO:0007669"/>
    <property type="project" value="UniProtKB-SubCell"/>
</dbReference>
<dbReference type="GO" id="GO:0000981">
    <property type="term" value="F:DNA-binding transcription factor activity, RNA polymerase II-specific"/>
    <property type="evidence" value="ECO:0007669"/>
    <property type="project" value="TreeGrafter"/>
</dbReference>
<dbReference type="GO" id="GO:0000978">
    <property type="term" value="F:RNA polymerase II cis-regulatory region sequence-specific DNA binding"/>
    <property type="evidence" value="ECO:0007669"/>
    <property type="project" value="TreeGrafter"/>
</dbReference>
<dbReference type="CDD" id="cd14721">
    <property type="entry name" value="bZIP_Fos"/>
    <property type="match status" value="1"/>
</dbReference>
<dbReference type="FunFam" id="1.20.5.170:FF:000006">
    <property type="entry name" value="fos-related antigen 2 isoform X1"/>
    <property type="match status" value="1"/>
</dbReference>
<dbReference type="Gene3D" id="1.20.5.170">
    <property type="match status" value="1"/>
</dbReference>
<dbReference type="InterPro" id="IPR000837">
    <property type="entry name" value="AP-1"/>
</dbReference>
<dbReference type="InterPro" id="IPR004827">
    <property type="entry name" value="bZIP"/>
</dbReference>
<dbReference type="InterPro" id="IPR046347">
    <property type="entry name" value="bZIP_sf"/>
</dbReference>
<dbReference type="PANTHER" id="PTHR23351">
    <property type="entry name" value="FOS TRANSCRIPTION FACTOR-RELATED"/>
    <property type="match status" value="1"/>
</dbReference>
<dbReference type="PANTHER" id="PTHR23351:SF4">
    <property type="entry name" value="PROTEIN C-FOS"/>
    <property type="match status" value="1"/>
</dbReference>
<dbReference type="Pfam" id="PF00170">
    <property type="entry name" value="bZIP_1"/>
    <property type="match status" value="1"/>
</dbReference>
<dbReference type="PRINTS" id="PR00042">
    <property type="entry name" value="LEUZIPPRFOS"/>
</dbReference>
<dbReference type="SMART" id="SM00338">
    <property type="entry name" value="BRLZ"/>
    <property type="match status" value="1"/>
</dbReference>
<dbReference type="SUPFAM" id="SSF57959">
    <property type="entry name" value="Leucine zipper domain"/>
    <property type="match status" value="1"/>
</dbReference>
<dbReference type="PROSITE" id="PS50217">
    <property type="entry name" value="BZIP"/>
    <property type="match status" value="1"/>
</dbReference>
<dbReference type="PROSITE" id="PS00036">
    <property type="entry name" value="BZIP_BASIC"/>
    <property type="match status" value="1"/>
</dbReference>
<feature type="chain" id="PRO_0000076474" description="Protein c-Fos">
    <location>
        <begin position="1"/>
        <end position="374"/>
    </location>
</feature>
<feature type="domain" description="bZIP" evidence="2">
    <location>
        <begin position="120"/>
        <end position="183"/>
    </location>
</feature>
<feature type="region of interest" description="Disordered" evidence="3">
    <location>
        <begin position="1"/>
        <end position="22"/>
    </location>
</feature>
<feature type="region of interest" description="Disordered" evidence="3">
    <location>
        <begin position="78"/>
        <end position="145"/>
    </location>
</feature>
<feature type="region of interest" description="Basic motif" evidence="2">
    <location>
        <begin position="122"/>
        <end position="142"/>
    </location>
</feature>
<feature type="region of interest" description="Leucine-zipper" evidence="2">
    <location>
        <begin position="148"/>
        <end position="176"/>
    </location>
</feature>
<feature type="region of interest" description="Disordered" evidence="3">
    <location>
        <begin position="355"/>
        <end position="374"/>
    </location>
</feature>
<feature type="compositionally biased region" description="Polar residues" evidence="3">
    <location>
        <begin position="1"/>
        <end position="11"/>
    </location>
</feature>
<feature type="compositionally biased region" description="Low complexity" evidence="3">
    <location>
        <begin position="356"/>
        <end position="368"/>
    </location>
</feature>
<accession>Q91496</accession>
<proteinExistence type="inferred from homology"/>
<keyword id="KW-0238">DNA-binding</keyword>
<keyword id="KW-0539">Nucleus</keyword>
<keyword id="KW-0597">Phosphoprotein</keyword>
<keyword id="KW-0656">Proto-oncogene</keyword>
<gene>
    <name type="primary">fos</name>
</gene>
<name>FOS_DICFU</name>